<accession>A3P0B1</accession>
<evidence type="ECO:0000255" key="1">
    <source>
        <dbReference type="HAMAP-Rule" id="MF_01369"/>
    </source>
</evidence>
<evidence type="ECO:0000305" key="2"/>
<dbReference type="EMBL" id="CP000572">
    <property type="protein sequence ID" value="ABN88984.1"/>
    <property type="molecule type" value="Genomic_DNA"/>
</dbReference>
<dbReference type="RefSeq" id="WP_004199275.1">
    <property type="nucleotide sequence ID" value="NC_009076.1"/>
</dbReference>
<dbReference type="SMR" id="A3P0B1"/>
<dbReference type="GeneID" id="98107158"/>
<dbReference type="KEGG" id="bpl:BURPS1106A_3802"/>
<dbReference type="HOGENOM" id="CLU_037562_3_1_4"/>
<dbReference type="Proteomes" id="UP000006738">
    <property type="component" value="Chromosome I"/>
</dbReference>
<dbReference type="GO" id="GO:1990904">
    <property type="term" value="C:ribonucleoprotein complex"/>
    <property type="evidence" value="ECO:0007669"/>
    <property type="project" value="UniProtKB-KW"/>
</dbReference>
<dbReference type="GO" id="GO:0005840">
    <property type="term" value="C:ribosome"/>
    <property type="evidence" value="ECO:0007669"/>
    <property type="project" value="UniProtKB-KW"/>
</dbReference>
<dbReference type="GO" id="GO:0019843">
    <property type="term" value="F:rRNA binding"/>
    <property type="evidence" value="ECO:0007669"/>
    <property type="project" value="UniProtKB-UniRule"/>
</dbReference>
<dbReference type="GO" id="GO:0003735">
    <property type="term" value="F:structural constituent of ribosome"/>
    <property type="evidence" value="ECO:0007669"/>
    <property type="project" value="InterPro"/>
</dbReference>
<dbReference type="GO" id="GO:0006412">
    <property type="term" value="P:translation"/>
    <property type="evidence" value="ECO:0007669"/>
    <property type="project" value="UniProtKB-UniRule"/>
</dbReference>
<dbReference type="FunFam" id="3.30.70.330:FF:000001">
    <property type="entry name" value="50S ribosomal protein L23"/>
    <property type="match status" value="1"/>
</dbReference>
<dbReference type="Gene3D" id="3.30.70.330">
    <property type="match status" value="1"/>
</dbReference>
<dbReference type="HAMAP" id="MF_01369_B">
    <property type="entry name" value="Ribosomal_uL23_B"/>
    <property type="match status" value="1"/>
</dbReference>
<dbReference type="InterPro" id="IPR012677">
    <property type="entry name" value="Nucleotide-bd_a/b_plait_sf"/>
</dbReference>
<dbReference type="InterPro" id="IPR013025">
    <property type="entry name" value="Ribosomal_uL23-like"/>
</dbReference>
<dbReference type="InterPro" id="IPR012678">
    <property type="entry name" value="Ribosomal_uL23/eL15/eS24_sf"/>
</dbReference>
<dbReference type="NCBIfam" id="NF004359">
    <property type="entry name" value="PRK05738.1-3"/>
    <property type="match status" value="1"/>
</dbReference>
<dbReference type="NCBIfam" id="NF004363">
    <property type="entry name" value="PRK05738.2-4"/>
    <property type="match status" value="1"/>
</dbReference>
<dbReference type="PANTHER" id="PTHR11620">
    <property type="entry name" value="60S RIBOSOMAL PROTEIN L23A"/>
    <property type="match status" value="1"/>
</dbReference>
<dbReference type="Pfam" id="PF00276">
    <property type="entry name" value="Ribosomal_L23"/>
    <property type="match status" value="1"/>
</dbReference>
<dbReference type="SUPFAM" id="SSF54189">
    <property type="entry name" value="Ribosomal proteins S24e, L23 and L15e"/>
    <property type="match status" value="1"/>
</dbReference>
<proteinExistence type="inferred from homology"/>
<name>RL23_BURP0</name>
<sequence>MSEIRKNDHRLMQVLLAPVISEKATLVADKNEQVVFEVAPDATKQEVKAAVELLFKVEVDSVNVLVQKGKQKRFGRSMGRRKDVKKAYVCLKPGQEINFEAEAK</sequence>
<protein>
    <recommendedName>
        <fullName evidence="1">Large ribosomal subunit protein uL23</fullName>
    </recommendedName>
    <alternativeName>
        <fullName evidence="2">50S ribosomal protein L23</fullName>
    </alternativeName>
</protein>
<organism>
    <name type="scientific">Burkholderia pseudomallei (strain 1106a)</name>
    <dbReference type="NCBI Taxonomy" id="357348"/>
    <lineage>
        <taxon>Bacteria</taxon>
        <taxon>Pseudomonadati</taxon>
        <taxon>Pseudomonadota</taxon>
        <taxon>Betaproteobacteria</taxon>
        <taxon>Burkholderiales</taxon>
        <taxon>Burkholderiaceae</taxon>
        <taxon>Burkholderia</taxon>
        <taxon>pseudomallei group</taxon>
    </lineage>
</organism>
<gene>
    <name evidence="1" type="primary">rplW</name>
    <name type="ordered locus">BURPS1106A_3802</name>
</gene>
<keyword id="KW-0687">Ribonucleoprotein</keyword>
<keyword id="KW-0689">Ribosomal protein</keyword>
<keyword id="KW-0694">RNA-binding</keyword>
<keyword id="KW-0699">rRNA-binding</keyword>
<comment type="function">
    <text evidence="1">One of the early assembly proteins it binds 23S rRNA. One of the proteins that surrounds the polypeptide exit tunnel on the outside of the ribosome. Forms the main docking site for trigger factor binding to the ribosome.</text>
</comment>
<comment type="subunit">
    <text evidence="1">Part of the 50S ribosomal subunit. Contacts protein L29, and trigger factor when it is bound to the ribosome.</text>
</comment>
<comment type="similarity">
    <text evidence="1">Belongs to the universal ribosomal protein uL23 family.</text>
</comment>
<reference key="1">
    <citation type="journal article" date="2010" name="Genome Biol. Evol.">
        <title>Continuing evolution of Burkholderia mallei through genome reduction and large-scale rearrangements.</title>
        <authorList>
            <person name="Losada L."/>
            <person name="Ronning C.M."/>
            <person name="DeShazer D."/>
            <person name="Woods D."/>
            <person name="Fedorova N."/>
            <person name="Kim H.S."/>
            <person name="Shabalina S.A."/>
            <person name="Pearson T.R."/>
            <person name="Brinkac L."/>
            <person name="Tan P."/>
            <person name="Nandi T."/>
            <person name="Crabtree J."/>
            <person name="Badger J."/>
            <person name="Beckstrom-Sternberg S."/>
            <person name="Saqib M."/>
            <person name="Schutzer S.E."/>
            <person name="Keim P."/>
            <person name="Nierman W.C."/>
        </authorList>
    </citation>
    <scope>NUCLEOTIDE SEQUENCE [LARGE SCALE GENOMIC DNA]</scope>
    <source>
        <strain>1106a</strain>
    </source>
</reference>
<feature type="chain" id="PRO_1000068049" description="Large ribosomal subunit protein uL23">
    <location>
        <begin position="1"/>
        <end position="104"/>
    </location>
</feature>